<name>IPSG_MUSLU</name>
<keyword id="KW-0903">Direct protein sequencing</keyword>
<keyword id="KW-1015">Disulfide bond</keyword>
<keyword id="KW-0646">Protease inhibitor</keyword>
<keyword id="KW-0677">Repeat</keyword>
<keyword id="KW-0964">Secreted</keyword>
<keyword id="KW-0722">Serine protease inhibitor</keyword>
<comment type="function">
    <text>This inhibitor is composed of two homologous actively inhibiting halves: one which inhibits trypsin, the other which inhibits elastase.</text>
</comment>
<comment type="subcellular location">
    <subcellularLocation>
        <location>Secreted</location>
    </subcellularLocation>
</comment>
<accession>P81481</accession>
<evidence type="ECO:0000255" key="1">
    <source>
        <dbReference type="PROSITE-ProRule" id="PRU00798"/>
    </source>
</evidence>
<protein>
    <recommendedName>
        <fullName>Double-headed protease inhibitor, submandibular gland</fullName>
    </recommendedName>
</protein>
<dbReference type="SMR" id="P81481"/>
<dbReference type="MEROPS" id="I01.016"/>
<dbReference type="MEROPS" id="I01.017"/>
<dbReference type="GO" id="GO:0005576">
    <property type="term" value="C:extracellular region"/>
    <property type="evidence" value="ECO:0007669"/>
    <property type="project" value="UniProtKB-SubCell"/>
</dbReference>
<dbReference type="GO" id="GO:0004867">
    <property type="term" value="F:serine-type endopeptidase inhibitor activity"/>
    <property type="evidence" value="ECO:0007669"/>
    <property type="project" value="UniProtKB-KW"/>
</dbReference>
<dbReference type="CDD" id="cd00104">
    <property type="entry name" value="KAZAL_FS"/>
    <property type="match status" value="1"/>
</dbReference>
<dbReference type="FunFam" id="3.30.60.30:FF:000037">
    <property type="entry name" value="Ovomucoid"/>
    <property type="match status" value="1"/>
</dbReference>
<dbReference type="Gene3D" id="3.30.60.30">
    <property type="match status" value="2"/>
</dbReference>
<dbReference type="InterPro" id="IPR051597">
    <property type="entry name" value="Bifunctional_prot_inhibitor"/>
</dbReference>
<dbReference type="InterPro" id="IPR002350">
    <property type="entry name" value="Kazal_dom"/>
</dbReference>
<dbReference type="InterPro" id="IPR036058">
    <property type="entry name" value="Kazal_dom_sf"/>
</dbReference>
<dbReference type="InterPro" id="IPR001239">
    <property type="entry name" value="Prot_inh_Kazal-m"/>
</dbReference>
<dbReference type="PANTHER" id="PTHR47729:SF1">
    <property type="entry name" value="OVOMUCOID-LIKE-RELATED"/>
    <property type="match status" value="1"/>
</dbReference>
<dbReference type="PANTHER" id="PTHR47729">
    <property type="entry name" value="SERINE PEPTIDASE INHIBITOR, KAZAL TYPE 2, TANDEM DUPLICATE 1-RELATED"/>
    <property type="match status" value="1"/>
</dbReference>
<dbReference type="Pfam" id="PF00050">
    <property type="entry name" value="Kazal_1"/>
    <property type="match status" value="2"/>
</dbReference>
<dbReference type="PRINTS" id="PR00290">
    <property type="entry name" value="KAZALINHBTR"/>
</dbReference>
<dbReference type="SMART" id="SM00280">
    <property type="entry name" value="KAZAL"/>
    <property type="match status" value="2"/>
</dbReference>
<dbReference type="SUPFAM" id="SSF100895">
    <property type="entry name" value="Kazal-type serine protease inhibitors"/>
    <property type="match status" value="2"/>
</dbReference>
<dbReference type="PROSITE" id="PS00282">
    <property type="entry name" value="KAZAL_1"/>
    <property type="match status" value="2"/>
</dbReference>
<dbReference type="PROSITE" id="PS51465">
    <property type="entry name" value="KAZAL_2"/>
    <property type="match status" value="2"/>
</dbReference>
<sequence length="122" mass="13710">APPPVGDQAGGRKVDCFKYNTTGSEFACSRKWQPVCGTDHRTYSNECMFCMLTQNKRFPVRILQDNKCDIECPQYSDMCTMDYLPLCGSDGKNYSNKCLFCNAVLRSRGALFLAKHGQCQSP</sequence>
<proteinExistence type="evidence at protein level"/>
<reference key="1">
    <citation type="journal article" date="1993" name="Comp. Biochem. Physiol.">
        <title>Amino acid sequences of mammalian kazal-type proteinase inhibitors from salivary glands.</title>
        <authorList>
            <person name="Hochstrasser K."/>
            <person name="Wachter E."/>
            <person name="Reisinger P.W.M."/>
            <person name="Greim M."/>
            <person name="Albrecht G.J."/>
            <person name="Gebhard W."/>
        </authorList>
    </citation>
    <scope>PROTEIN SEQUENCE</scope>
</reference>
<feature type="chain" id="PRO_0000073039" description="Double-headed protease inhibitor, submandibular gland">
    <location>
        <begin position="1"/>
        <end position="122"/>
    </location>
</feature>
<feature type="domain" description="Kazal-like 1" evidence="1">
    <location>
        <begin position="10"/>
        <end position="70"/>
    </location>
</feature>
<feature type="domain" description="Kazal-like 2" evidence="1">
    <location>
        <begin position="71"/>
        <end position="121"/>
    </location>
</feature>
<feature type="site" description="Reactive bond 1 for trypsin">
    <location>
        <begin position="30"/>
        <end position="31"/>
    </location>
</feature>
<feature type="site" description="Reactive bond 2 for elastase">
    <location>
        <begin position="81"/>
        <end position="82"/>
    </location>
</feature>
<feature type="disulfide bond" evidence="1">
    <location>
        <begin position="16"/>
        <end position="50"/>
    </location>
</feature>
<feature type="disulfide bond" evidence="1">
    <location>
        <begin position="28"/>
        <end position="47"/>
    </location>
</feature>
<feature type="disulfide bond" evidence="1">
    <location>
        <begin position="36"/>
        <end position="68"/>
    </location>
</feature>
<feature type="disulfide bond" evidence="1">
    <location>
        <begin position="72"/>
        <end position="101"/>
    </location>
</feature>
<feature type="disulfide bond" evidence="1">
    <location>
        <begin position="79"/>
        <end position="98"/>
    </location>
</feature>
<feature type="disulfide bond" evidence="1">
    <location>
        <begin position="87"/>
        <end position="119"/>
    </location>
</feature>
<organism>
    <name type="scientific">Mustela lutreola</name>
    <name type="common">European mink</name>
    <dbReference type="NCBI Taxonomy" id="9666"/>
    <lineage>
        <taxon>Eukaryota</taxon>
        <taxon>Metazoa</taxon>
        <taxon>Chordata</taxon>
        <taxon>Craniata</taxon>
        <taxon>Vertebrata</taxon>
        <taxon>Euteleostomi</taxon>
        <taxon>Mammalia</taxon>
        <taxon>Eutheria</taxon>
        <taxon>Laurasiatheria</taxon>
        <taxon>Carnivora</taxon>
        <taxon>Caniformia</taxon>
        <taxon>Musteloidea</taxon>
        <taxon>Mustelidae</taxon>
        <taxon>Mustelinae</taxon>
        <taxon>Mustela</taxon>
    </lineage>
</organism>